<reference key="1">
    <citation type="submission" date="1999-04" db="EMBL/GenBank/DDBJ databases">
        <title>Cloning and expression of two novel cDNAs for hsp-70-related intracellular vitamin D binding proteins.</title>
        <authorList>
            <person name="Wu S."/>
            <person name="Ren S."/>
            <person name="Chen H."/>
            <person name="Chien R."/>
            <person name="Gacad M.A."/>
            <person name="Adams J.S."/>
        </authorList>
    </citation>
    <scope>NUCLEOTIDE SEQUENCE [MRNA]</scope>
</reference>
<name>HSP76_SAGOE</name>
<organism>
    <name type="scientific">Saguinus oedipus</name>
    <name type="common">Cotton-top tamarin</name>
    <dbReference type="NCBI Taxonomy" id="9490"/>
    <lineage>
        <taxon>Eukaryota</taxon>
        <taxon>Metazoa</taxon>
        <taxon>Chordata</taxon>
        <taxon>Craniata</taxon>
        <taxon>Vertebrata</taxon>
        <taxon>Euteleostomi</taxon>
        <taxon>Mammalia</taxon>
        <taxon>Eutheria</taxon>
        <taxon>Euarchontoglires</taxon>
        <taxon>Primates</taxon>
        <taxon>Haplorrhini</taxon>
        <taxon>Platyrrhini</taxon>
        <taxon>Cebidae</taxon>
        <taxon>Callitrichinae</taxon>
        <taxon>Saguinus</taxon>
    </lineage>
</organism>
<feature type="chain" id="PRO_0000078266" description="Heat shock 70 kDa protein 6">
    <location>
        <begin position="1"/>
        <end position="643"/>
    </location>
</feature>
<feature type="region of interest" description="Nucleotide-binding domain (NBD)" evidence="2">
    <location>
        <begin position="3"/>
        <end position="388"/>
    </location>
</feature>
<feature type="region of interest" description="Substrate-binding domain (SBD)" evidence="2">
    <location>
        <begin position="396"/>
        <end position="511"/>
    </location>
</feature>
<feature type="region of interest" description="Disordered" evidence="4">
    <location>
        <begin position="617"/>
        <end position="643"/>
    </location>
</feature>
<feature type="binding site" evidence="1">
    <location>
        <begin position="14"/>
        <end position="17"/>
    </location>
    <ligand>
        <name>ATP</name>
        <dbReference type="ChEBI" id="CHEBI:30616"/>
    </ligand>
</feature>
<feature type="binding site" evidence="1">
    <location>
        <position position="73"/>
    </location>
    <ligand>
        <name>ATP</name>
        <dbReference type="ChEBI" id="CHEBI:30616"/>
    </ligand>
</feature>
<feature type="binding site" evidence="1">
    <location>
        <begin position="204"/>
        <end position="206"/>
    </location>
    <ligand>
        <name>ATP</name>
        <dbReference type="ChEBI" id="CHEBI:30616"/>
    </ligand>
</feature>
<feature type="binding site" evidence="1">
    <location>
        <begin position="270"/>
        <end position="277"/>
    </location>
    <ligand>
        <name>ATP</name>
        <dbReference type="ChEBI" id="CHEBI:30616"/>
    </ligand>
</feature>
<feature type="binding site" evidence="1">
    <location>
        <begin position="341"/>
        <end position="344"/>
    </location>
    <ligand>
        <name>ATP</name>
        <dbReference type="ChEBI" id="CHEBI:30616"/>
    </ligand>
</feature>
<feature type="modified residue" description="N6,N6,N6-trimethyllysine; by METTL21A; in vitro" evidence="3">
    <location>
        <position position="563"/>
    </location>
</feature>
<dbReference type="EMBL" id="AF142572">
    <property type="protein sequence ID" value="AAF66617.1"/>
    <property type="molecule type" value="mRNA"/>
</dbReference>
<dbReference type="SMR" id="Q9N1U2"/>
<dbReference type="GO" id="GO:0005524">
    <property type="term" value="F:ATP binding"/>
    <property type="evidence" value="ECO:0007669"/>
    <property type="project" value="UniProtKB-KW"/>
</dbReference>
<dbReference type="GO" id="GO:0140662">
    <property type="term" value="F:ATP-dependent protein folding chaperone"/>
    <property type="evidence" value="ECO:0007669"/>
    <property type="project" value="InterPro"/>
</dbReference>
<dbReference type="CDD" id="cd10233">
    <property type="entry name" value="ASKHA_NBD_HSP70_HSPA1"/>
    <property type="match status" value="1"/>
</dbReference>
<dbReference type="FunFam" id="2.60.34.10:FF:000002">
    <property type="entry name" value="Heat shock 70 kDa"/>
    <property type="match status" value="1"/>
</dbReference>
<dbReference type="FunFam" id="3.30.420.40:FF:000172">
    <property type="entry name" value="Heat shock 70 kDa protein"/>
    <property type="match status" value="1"/>
</dbReference>
<dbReference type="FunFam" id="1.20.1270.10:FF:000033">
    <property type="entry name" value="heat shock 70 kDa protein 6"/>
    <property type="match status" value="1"/>
</dbReference>
<dbReference type="FunFam" id="3.30.30.30:FF:000001">
    <property type="entry name" value="heat shock 70 kDa protein-like"/>
    <property type="match status" value="1"/>
</dbReference>
<dbReference type="FunFam" id="3.30.420.40:FF:000135">
    <property type="entry name" value="Heat shock cognate 71 kDa protein"/>
    <property type="match status" value="1"/>
</dbReference>
<dbReference type="FunFam" id="3.90.640.10:FF:000134">
    <property type="entry name" value="Heat shock cognate 71 kDa protein"/>
    <property type="match status" value="1"/>
</dbReference>
<dbReference type="FunFam" id="3.30.420.40:FF:000026">
    <property type="entry name" value="Heat shock protein 70"/>
    <property type="match status" value="1"/>
</dbReference>
<dbReference type="Gene3D" id="1.20.1270.10">
    <property type="match status" value="1"/>
</dbReference>
<dbReference type="Gene3D" id="3.30.30.30">
    <property type="match status" value="1"/>
</dbReference>
<dbReference type="Gene3D" id="3.30.420.40">
    <property type="match status" value="2"/>
</dbReference>
<dbReference type="Gene3D" id="3.90.640.10">
    <property type="entry name" value="Actin, Chain A, domain 4"/>
    <property type="match status" value="1"/>
</dbReference>
<dbReference type="Gene3D" id="2.60.34.10">
    <property type="entry name" value="Substrate Binding Domain Of DNAk, Chain A, domain 1"/>
    <property type="match status" value="1"/>
</dbReference>
<dbReference type="InterPro" id="IPR043129">
    <property type="entry name" value="ATPase_NBD"/>
</dbReference>
<dbReference type="InterPro" id="IPR018181">
    <property type="entry name" value="Heat_shock_70_CS"/>
</dbReference>
<dbReference type="InterPro" id="IPR029048">
    <property type="entry name" value="HSP70_C_sf"/>
</dbReference>
<dbReference type="InterPro" id="IPR029047">
    <property type="entry name" value="HSP70_peptide-bd_sf"/>
</dbReference>
<dbReference type="InterPro" id="IPR013126">
    <property type="entry name" value="Hsp_70_fam"/>
</dbReference>
<dbReference type="NCBIfam" id="NF001413">
    <property type="entry name" value="PRK00290.1"/>
    <property type="match status" value="1"/>
</dbReference>
<dbReference type="PANTHER" id="PTHR19375">
    <property type="entry name" value="HEAT SHOCK PROTEIN 70KDA"/>
    <property type="match status" value="1"/>
</dbReference>
<dbReference type="Pfam" id="PF00012">
    <property type="entry name" value="HSP70"/>
    <property type="match status" value="1"/>
</dbReference>
<dbReference type="PRINTS" id="PR00301">
    <property type="entry name" value="HEATSHOCK70"/>
</dbReference>
<dbReference type="SUPFAM" id="SSF53067">
    <property type="entry name" value="Actin-like ATPase domain"/>
    <property type="match status" value="2"/>
</dbReference>
<dbReference type="SUPFAM" id="SSF100934">
    <property type="entry name" value="Heat shock protein 70kD (HSP70), C-terminal subdomain"/>
    <property type="match status" value="1"/>
</dbReference>
<dbReference type="SUPFAM" id="SSF100920">
    <property type="entry name" value="Heat shock protein 70kD (HSP70), peptide-binding domain"/>
    <property type="match status" value="1"/>
</dbReference>
<dbReference type="PROSITE" id="PS00297">
    <property type="entry name" value="HSP70_1"/>
    <property type="match status" value="1"/>
</dbReference>
<dbReference type="PROSITE" id="PS00329">
    <property type="entry name" value="HSP70_2"/>
    <property type="match status" value="1"/>
</dbReference>
<dbReference type="PROSITE" id="PS01036">
    <property type="entry name" value="HSP70_3"/>
    <property type="match status" value="1"/>
</dbReference>
<protein>
    <recommendedName>
        <fullName>Heat shock 70 kDa protein 6</fullName>
    </recommendedName>
    <alternativeName>
        <fullName>Hsp-70-related intracellular vitamin D-binding protein</fullName>
    </alternativeName>
</protein>
<evidence type="ECO:0000250" key="1"/>
<evidence type="ECO:0000250" key="2">
    <source>
        <dbReference type="UniProtKB" id="P11142"/>
    </source>
</evidence>
<evidence type="ECO:0000250" key="3">
    <source>
        <dbReference type="UniProtKB" id="P17066"/>
    </source>
</evidence>
<evidence type="ECO:0000256" key="4">
    <source>
        <dbReference type="SAM" id="MobiDB-lite"/>
    </source>
</evidence>
<evidence type="ECO:0000305" key="5"/>
<comment type="function">
    <text evidence="3">Molecular chaperone implicated in a wide variety of cellular processes, including protection of the proteome from stress, folding and transport of newly synthesized polypeptides, activation of proteolysis of misfolded proteins and the formation and dissociation of protein complexes. Plays a pivotal role in the protein quality control system, ensuring the correct folding of proteins, the re-folding of misfolded proteins and controlling the targeting of proteins for subsequent degradation. This is achieved through cycles of ATP binding, ATP hydrolysis and ADP release, mediated by co-chaperones. The affinity for polypeptides is regulated by its nucleotide bound state. In the ATP-bound form, it has a low affinity for substrate proteins. However, upon hydrolysis of the ATP to ADP, it undergoes a conformational change that increases its affinity for substrate proteins. It goes through repeated cycles of ATP hydrolysis and nucleotide exchange, which permits cycles of substrate binding and release.</text>
</comment>
<comment type="domain">
    <text evidence="3">The N-terminal nucleotide binding domain (NBD) (also known as the ATPase domain) is responsible for binding and hydrolyzing ATP. The C-terminal substrate-binding domain (SBD) (also known as peptide-binding domain) binds to the client/substrate proteins. The two domains are allosterically coupled so that, when ATP is bound to the NBD, the SBD binds relatively weakly to clients. When ADP is bound in the NBD, a conformational change enhances the affinity of the SBD for client proteins.</text>
</comment>
<comment type="similarity">
    <text evidence="5">Belongs to the heat shock protein 70 family.</text>
</comment>
<proteinExistence type="evidence at transcript level"/>
<gene>
    <name type="primary">HSPA6</name>
</gene>
<accession>Q9N1U2</accession>
<sequence length="643" mass="71156">MQAPRELAVGIDLGTTYSCVGVFQQGRVEILANDQGNRTTPSYVAFTDTERLVGDAAKSQAALNPLNTVFDAKRLIGRKFADATVQADMKHWPFQVVSEGCKPKVRVSYRGEDKSFYPEEISSMVLSKMKETAEAYLGQPVKHAVITVPAYFNDSQRQATKDAGAIAGLNVLRIINEPTAAAIAHGLDRRGAGERNVLIFDLGGGTFDVSVLSIDAGVFEVKATAGDTHLGGEDFDNRLVNHFVEEFRRKHRKDLSWNKRALRRLRTACERAKRTLSSSTQATLEIDSLFEGVDFYTSITRARFEELCSDLFRSTLEPVEKALRDAKLDKAQIHDVVLVGGSTRIPRVQKLLQDFFNGKELNKSINPDEAVAYGAAVQAAVLMGDKCEKVRDLLLLDVAPLSLGLETAGGVMTTLIQRNATIPTKQTQTFTTYSDNQPGVFIQVYEGERAMTKDNNLLGRFELSGIPPAPRGVPQIEVTFDIDANGILSVTATDRSTGKANKITITNDKGRLSKEEVERMVREAEQYKAEDEAQRDRVAAKNSLETHVFHVKGSLQEESLRDKIPKEDRHKVQDKCQEVLAWLEHNQLADKEEYEHQKRELEQICRPIFSRLYGGPGVPGGSSCGAQARQGDRSTGPIIEEVD</sequence>
<keyword id="KW-0067">ATP-binding</keyword>
<keyword id="KW-0488">Methylation</keyword>
<keyword id="KW-0547">Nucleotide-binding</keyword>
<keyword id="KW-0346">Stress response</keyword>